<proteinExistence type="inferred from homology"/>
<keyword id="KW-0169">Cobalamin biosynthesis</keyword>
<keyword id="KW-0456">Lyase</keyword>
<keyword id="KW-0489">Methyltransferase</keyword>
<keyword id="KW-0511">Multifunctional enzyme</keyword>
<keyword id="KW-0520">NAD</keyword>
<keyword id="KW-0560">Oxidoreductase</keyword>
<keyword id="KW-0597">Phosphoprotein</keyword>
<keyword id="KW-0627">Porphyrin biosynthesis</keyword>
<keyword id="KW-0949">S-adenosyl-L-methionine</keyword>
<keyword id="KW-0808">Transferase</keyword>
<accession>B5YTS6</accession>
<evidence type="ECO:0000255" key="1">
    <source>
        <dbReference type="HAMAP-Rule" id="MF_01646"/>
    </source>
</evidence>
<sequence length="457" mass="49932">MDHLPIFCQLRDRDCLIVGGGDVAERKARLLLDAGARLTVNALAFIPQFTAWADAGMLTLVEGPFDESLLDTCWLAIAATDDDALNQRVSEAAEARHIFCNVVDAPKAASFIMPSIIDRSPLMVAVSSGGTSPVLARLLREKLESLLPLHLGQVAKYAGQLRGRVKQQFATMGERRRFWEKLFVNDRLAQSLANNDQKAITETTEQLINEPLDHRGEVVLVGAGPGDAGLLTLKGLQQIQQADVVVYDRLVSDDIMNLVRRDADRVFVGKRAGYHCVPQEEINQILLREAQKGKRVVRLKGGDPFIFGRGGEELETLCNAGIPFSVVPGITAASGCSAYSGIPLTHRDYAQSVRLITGHLKTGGELDWENLAAEKQTLVFYMGLNQAATIQQKLIEHGMPGEMPVAIVENGTAVTQRVIDGTLTQLGELAQQMNSPSLIIIGRVVGLRDKLNWFSNH</sequence>
<comment type="function">
    <text evidence="1">Multifunctional enzyme that catalyzes the SAM-dependent methylations of uroporphyrinogen III at position C-2 and C-7 to form precorrin-2 via precorrin-1. Then it catalyzes the NAD-dependent ring dehydrogenation of precorrin-2 to yield sirohydrochlorin. Finally, it catalyzes the ferrochelation of sirohydrochlorin to yield siroheme.</text>
</comment>
<comment type="catalytic activity">
    <reaction evidence="1">
        <text>uroporphyrinogen III + 2 S-adenosyl-L-methionine = precorrin-2 + 2 S-adenosyl-L-homocysteine + H(+)</text>
        <dbReference type="Rhea" id="RHEA:32459"/>
        <dbReference type="ChEBI" id="CHEBI:15378"/>
        <dbReference type="ChEBI" id="CHEBI:57308"/>
        <dbReference type="ChEBI" id="CHEBI:57856"/>
        <dbReference type="ChEBI" id="CHEBI:58827"/>
        <dbReference type="ChEBI" id="CHEBI:59789"/>
        <dbReference type="EC" id="2.1.1.107"/>
    </reaction>
</comment>
<comment type="catalytic activity">
    <reaction evidence="1">
        <text>precorrin-2 + NAD(+) = sirohydrochlorin + NADH + 2 H(+)</text>
        <dbReference type="Rhea" id="RHEA:15613"/>
        <dbReference type="ChEBI" id="CHEBI:15378"/>
        <dbReference type="ChEBI" id="CHEBI:57540"/>
        <dbReference type="ChEBI" id="CHEBI:57945"/>
        <dbReference type="ChEBI" id="CHEBI:58351"/>
        <dbReference type="ChEBI" id="CHEBI:58827"/>
        <dbReference type="EC" id="1.3.1.76"/>
    </reaction>
</comment>
<comment type="catalytic activity">
    <reaction evidence="1">
        <text>siroheme + 2 H(+) = sirohydrochlorin + Fe(2+)</text>
        <dbReference type="Rhea" id="RHEA:24360"/>
        <dbReference type="ChEBI" id="CHEBI:15378"/>
        <dbReference type="ChEBI" id="CHEBI:29033"/>
        <dbReference type="ChEBI" id="CHEBI:58351"/>
        <dbReference type="ChEBI" id="CHEBI:60052"/>
        <dbReference type="EC" id="4.99.1.4"/>
    </reaction>
</comment>
<comment type="pathway">
    <text evidence="1">Cofactor biosynthesis; adenosylcobalamin biosynthesis; precorrin-2 from uroporphyrinogen III: step 1/1.</text>
</comment>
<comment type="pathway">
    <text evidence="1">Cofactor biosynthesis; adenosylcobalamin biosynthesis; sirohydrochlorin from precorrin-2: step 1/1.</text>
</comment>
<comment type="pathway">
    <text evidence="1">Porphyrin-containing compound metabolism; siroheme biosynthesis; precorrin-2 from uroporphyrinogen III: step 1/1.</text>
</comment>
<comment type="pathway">
    <text evidence="1">Porphyrin-containing compound metabolism; siroheme biosynthesis; siroheme from sirohydrochlorin: step 1/1.</text>
</comment>
<comment type="pathway">
    <text evidence="1">Porphyrin-containing compound metabolism; siroheme biosynthesis; sirohydrochlorin from precorrin-2: step 1/1.</text>
</comment>
<comment type="similarity">
    <text evidence="1">In the N-terminal section; belongs to the precorrin-2 dehydrogenase / sirohydrochlorin ferrochelatase family.</text>
</comment>
<comment type="similarity">
    <text evidence="1">In the C-terminal section; belongs to the precorrin methyltransferase family.</text>
</comment>
<gene>
    <name evidence="1" type="primary">cysG</name>
    <name type="ordered locus">ECH74115_4679</name>
</gene>
<reference key="1">
    <citation type="journal article" date="2011" name="Proc. Natl. Acad. Sci. U.S.A.">
        <title>Genomic anatomy of Escherichia coli O157:H7 outbreaks.</title>
        <authorList>
            <person name="Eppinger M."/>
            <person name="Mammel M.K."/>
            <person name="Leclerc J.E."/>
            <person name="Ravel J."/>
            <person name="Cebula T.A."/>
        </authorList>
    </citation>
    <scope>NUCLEOTIDE SEQUENCE [LARGE SCALE GENOMIC DNA]</scope>
    <source>
        <strain>EC4115 / EHEC</strain>
    </source>
</reference>
<protein>
    <recommendedName>
        <fullName evidence="1">Siroheme synthase</fullName>
    </recommendedName>
    <domain>
        <recommendedName>
            <fullName evidence="1">Uroporphyrinogen-III C-methyltransferase</fullName>
            <shortName evidence="1">Urogen III methylase</shortName>
            <ecNumber evidence="1">2.1.1.107</ecNumber>
        </recommendedName>
        <alternativeName>
            <fullName evidence="1">SUMT</fullName>
        </alternativeName>
        <alternativeName>
            <fullName evidence="1">Uroporphyrinogen III methylase</fullName>
            <shortName evidence="1">UROM</shortName>
        </alternativeName>
    </domain>
    <domain>
        <recommendedName>
            <fullName evidence="1">Precorrin-2 dehydrogenase</fullName>
            <ecNumber evidence="1">1.3.1.76</ecNumber>
        </recommendedName>
    </domain>
    <domain>
        <recommendedName>
            <fullName evidence="1">Sirohydrochlorin ferrochelatase</fullName>
            <ecNumber evidence="1">4.99.1.4</ecNumber>
        </recommendedName>
    </domain>
</protein>
<organism>
    <name type="scientific">Escherichia coli O157:H7 (strain EC4115 / EHEC)</name>
    <dbReference type="NCBI Taxonomy" id="444450"/>
    <lineage>
        <taxon>Bacteria</taxon>
        <taxon>Pseudomonadati</taxon>
        <taxon>Pseudomonadota</taxon>
        <taxon>Gammaproteobacteria</taxon>
        <taxon>Enterobacterales</taxon>
        <taxon>Enterobacteriaceae</taxon>
        <taxon>Escherichia</taxon>
    </lineage>
</organism>
<feature type="chain" id="PRO_1000186939" description="Siroheme synthase">
    <location>
        <begin position="1"/>
        <end position="457"/>
    </location>
</feature>
<feature type="region of interest" description="Precorrin-2 dehydrogenase /sirohydrochlorin ferrochelatase" evidence="1">
    <location>
        <begin position="1"/>
        <end position="204"/>
    </location>
</feature>
<feature type="region of interest" description="Uroporphyrinogen-III C-methyltransferase" evidence="1">
    <location>
        <begin position="216"/>
        <end position="457"/>
    </location>
</feature>
<feature type="active site" description="Proton acceptor" evidence="1">
    <location>
        <position position="248"/>
    </location>
</feature>
<feature type="active site" description="Proton donor" evidence="1">
    <location>
        <position position="270"/>
    </location>
</feature>
<feature type="binding site" evidence="1">
    <location>
        <begin position="22"/>
        <end position="23"/>
    </location>
    <ligand>
        <name>NAD(+)</name>
        <dbReference type="ChEBI" id="CHEBI:57540"/>
    </ligand>
</feature>
<feature type="binding site" evidence="1">
    <location>
        <begin position="43"/>
        <end position="44"/>
    </location>
    <ligand>
        <name>NAD(+)</name>
        <dbReference type="ChEBI" id="CHEBI:57540"/>
    </ligand>
</feature>
<feature type="binding site" evidence="1">
    <location>
        <position position="225"/>
    </location>
    <ligand>
        <name>S-adenosyl-L-methionine</name>
        <dbReference type="ChEBI" id="CHEBI:59789"/>
    </ligand>
</feature>
<feature type="binding site" evidence="1">
    <location>
        <begin position="301"/>
        <end position="303"/>
    </location>
    <ligand>
        <name>S-adenosyl-L-methionine</name>
        <dbReference type="ChEBI" id="CHEBI:59789"/>
    </ligand>
</feature>
<feature type="binding site" evidence="1">
    <location>
        <position position="306"/>
    </location>
    <ligand>
        <name>S-adenosyl-L-methionine</name>
        <dbReference type="ChEBI" id="CHEBI:59789"/>
    </ligand>
</feature>
<feature type="binding site" evidence="1">
    <location>
        <begin position="331"/>
        <end position="332"/>
    </location>
    <ligand>
        <name>S-adenosyl-L-methionine</name>
        <dbReference type="ChEBI" id="CHEBI:59789"/>
    </ligand>
</feature>
<feature type="binding site" evidence="1">
    <location>
        <position position="382"/>
    </location>
    <ligand>
        <name>S-adenosyl-L-methionine</name>
        <dbReference type="ChEBI" id="CHEBI:59789"/>
    </ligand>
</feature>
<feature type="binding site" evidence="1">
    <location>
        <position position="411"/>
    </location>
    <ligand>
        <name>S-adenosyl-L-methionine</name>
        <dbReference type="ChEBI" id="CHEBI:59789"/>
    </ligand>
</feature>
<feature type="modified residue" description="Phosphoserine" evidence="1">
    <location>
        <position position="128"/>
    </location>
</feature>
<name>CYSG_ECO5E</name>
<dbReference type="EC" id="2.1.1.107" evidence="1"/>
<dbReference type="EC" id="1.3.1.76" evidence="1"/>
<dbReference type="EC" id="4.99.1.4" evidence="1"/>
<dbReference type="EMBL" id="CP001164">
    <property type="protein sequence ID" value="ACI36013.1"/>
    <property type="molecule type" value="Genomic_DNA"/>
</dbReference>
<dbReference type="RefSeq" id="WP_000349846.1">
    <property type="nucleotide sequence ID" value="NC_011353.1"/>
</dbReference>
<dbReference type="SMR" id="B5YTS6"/>
<dbReference type="KEGG" id="ecf:ECH74115_4679"/>
<dbReference type="HOGENOM" id="CLU_011276_2_0_6"/>
<dbReference type="UniPathway" id="UPA00148">
    <property type="reaction ID" value="UER00211"/>
</dbReference>
<dbReference type="UniPathway" id="UPA00148">
    <property type="reaction ID" value="UER00222"/>
</dbReference>
<dbReference type="UniPathway" id="UPA00262">
    <property type="reaction ID" value="UER00211"/>
</dbReference>
<dbReference type="UniPathway" id="UPA00262">
    <property type="reaction ID" value="UER00222"/>
</dbReference>
<dbReference type="UniPathway" id="UPA00262">
    <property type="reaction ID" value="UER00376"/>
</dbReference>
<dbReference type="GO" id="GO:0051287">
    <property type="term" value="F:NAD binding"/>
    <property type="evidence" value="ECO:0007669"/>
    <property type="project" value="InterPro"/>
</dbReference>
<dbReference type="GO" id="GO:0043115">
    <property type="term" value="F:precorrin-2 dehydrogenase activity"/>
    <property type="evidence" value="ECO:0007669"/>
    <property type="project" value="UniProtKB-UniRule"/>
</dbReference>
<dbReference type="GO" id="GO:0051266">
    <property type="term" value="F:sirohydrochlorin ferrochelatase activity"/>
    <property type="evidence" value="ECO:0007669"/>
    <property type="project" value="UniProtKB-EC"/>
</dbReference>
<dbReference type="GO" id="GO:0004851">
    <property type="term" value="F:uroporphyrin-III C-methyltransferase activity"/>
    <property type="evidence" value="ECO:0007669"/>
    <property type="project" value="UniProtKB-UniRule"/>
</dbReference>
<dbReference type="GO" id="GO:0009236">
    <property type="term" value="P:cobalamin biosynthetic process"/>
    <property type="evidence" value="ECO:0007669"/>
    <property type="project" value="UniProtKB-UniRule"/>
</dbReference>
<dbReference type="GO" id="GO:0032259">
    <property type="term" value="P:methylation"/>
    <property type="evidence" value="ECO:0007669"/>
    <property type="project" value="UniProtKB-KW"/>
</dbReference>
<dbReference type="GO" id="GO:0019354">
    <property type="term" value="P:siroheme biosynthetic process"/>
    <property type="evidence" value="ECO:0007669"/>
    <property type="project" value="UniProtKB-UniRule"/>
</dbReference>
<dbReference type="CDD" id="cd11642">
    <property type="entry name" value="SUMT"/>
    <property type="match status" value="1"/>
</dbReference>
<dbReference type="FunFam" id="1.10.8.210:FF:000001">
    <property type="entry name" value="Siroheme synthase"/>
    <property type="match status" value="1"/>
</dbReference>
<dbReference type="FunFam" id="3.30.160.110:FF:000001">
    <property type="entry name" value="Siroheme synthase"/>
    <property type="match status" value="1"/>
</dbReference>
<dbReference type="FunFam" id="3.30.950.10:FF:000001">
    <property type="entry name" value="Siroheme synthase"/>
    <property type="match status" value="1"/>
</dbReference>
<dbReference type="FunFam" id="3.40.1010.10:FF:000001">
    <property type="entry name" value="Siroheme synthase"/>
    <property type="match status" value="1"/>
</dbReference>
<dbReference type="FunFam" id="3.40.50.720:FF:000092">
    <property type="entry name" value="Siroheme synthase"/>
    <property type="match status" value="1"/>
</dbReference>
<dbReference type="Gene3D" id="3.40.1010.10">
    <property type="entry name" value="Cobalt-precorrin-4 Transmethylase, Domain 1"/>
    <property type="match status" value="1"/>
</dbReference>
<dbReference type="Gene3D" id="3.30.950.10">
    <property type="entry name" value="Methyltransferase, Cobalt-precorrin-4 Transmethylase, Domain 2"/>
    <property type="match status" value="1"/>
</dbReference>
<dbReference type="Gene3D" id="3.40.50.720">
    <property type="entry name" value="NAD(P)-binding Rossmann-like Domain"/>
    <property type="match status" value="1"/>
</dbReference>
<dbReference type="Gene3D" id="1.10.8.210">
    <property type="entry name" value="Sirohaem synthase, dimerisation domain"/>
    <property type="match status" value="1"/>
</dbReference>
<dbReference type="Gene3D" id="3.30.160.110">
    <property type="entry name" value="Siroheme synthase, domain 2"/>
    <property type="match status" value="1"/>
</dbReference>
<dbReference type="HAMAP" id="MF_01646">
    <property type="entry name" value="Siroheme_synth"/>
    <property type="match status" value="1"/>
</dbReference>
<dbReference type="InterPro" id="IPR000878">
    <property type="entry name" value="4pyrrol_Mease"/>
</dbReference>
<dbReference type="InterPro" id="IPR035996">
    <property type="entry name" value="4pyrrol_Methylase_sf"/>
</dbReference>
<dbReference type="InterPro" id="IPR014777">
    <property type="entry name" value="4pyrrole_Mease_sub1"/>
</dbReference>
<dbReference type="InterPro" id="IPR014776">
    <property type="entry name" value="4pyrrole_Mease_sub2"/>
</dbReference>
<dbReference type="InterPro" id="IPR006366">
    <property type="entry name" value="CobA/CysG_C"/>
</dbReference>
<dbReference type="InterPro" id="IPR036291">
    <property type="entry name" value="NAD(P)-bd_dom_sf"/>
</dbReference>
<dbReference type="InterPro" id="IPR050161">
    <property type="entry name" value="Siro_Cobalamin_biosynth"/>
</dbReference>
<dbReference type="InterPro" id="IPR037115">
    <property type="entry name" value="Sirohaem_synt_dimer_dom_sf"/>
</dbReference>
<dbReference type="InterPro" id="IPR012409">
    <property type="entry name" value="Sirohaem_synth"/>
</dbReference>
<dbReference type="InterPro" id="IPR028281">
    <property type="entry name" value="Sirohaem_synthase_central"/>
</dbReference>
<dbReference type="InterPro" id="IPR019478">
    <property type="entry name" value="Sirohaem_synthase_dimer_dom"/>
</dbReference>
<dbReference type="InterPro" id="IPR006367">
    <property type="entry name" value="Sirohaem_synthase_N"/>
</dbReference>
<dbReference type="InterPro" id="IPR003043">
    <property type="entry name" value="Uropor_MeTrfase_CS"/>
</dbReference>
<dbReference type="NCBIfam" id="TIGR01469">
    <property type="entry name" value="cobA_cysG_Cterm"/>
    <property type="match status" value="1"/>
</dbReference>
<dbReference type="NCBIfam" id="TIGR01470">
    <property type="entry name" value="cysG_Nterm"/>
    <property type="match status" value="1"/>
</dbReference>
<dbReference type="NCBIfam" id="NF004790">
    <property type="entry name" value="PRK06136.1"/>
    <property type="match status" value="1"/>
</dbReference>
<dbReference type="NCBIfam" id="NF007922">
    <property type="entry name" value="PRK10637.1"/>
    <property type="match status" value="1"/>
</dbReference>
<dbReference type="PANTHER" id="PTHR45790:SF1">
    <property type="entry name" value="SIROHEME SYNTHASE"/>
    <property type="match status" value="1"/>
</dbReference>
<dbReference type="PANTHER" id="PTHR45790">
    <property type="entry name" value="SIROHEME SYNTHASE-RELATED"/>
    <property type="match status" value="1"/>
</dbReference>
<dbReference type="Pfam" id="PF10414">
    <property type="entry name" value="CysG_dimeriser"/>
    <property type="match status" value="1"/>
</dbReference>
<dbReference type="Pfam" id="PF13241">
    <property type="entry name" value="NAD_binding_7"/>
    <property type="match status" value="1"/>
</dbReference>
<dbReference type="Pfam" id="PF14824">
    <property type="entry name" value="Sirohm_synth_M"/>
    <property type="match status" value="1"/>
</dbReference>
<dbReference type="Pfam" id="PF00590">
    <property type="entry name" value="TP_methylase"/>
    <property type="match status" value="1"/>
</dbReference>
<dbReference type="PIRSF" id="PIRSF036426">
    <property type="entry name" value="Sirohaem_synth"/>
    <property type="match status" value="1"/>
</dbReference>
<dbReference type="SUPFAM" id="SSF51735">
    <property type="entry name" value="NAD(P)-binding Rossmann-fold domains"/>
    <property type="match status" value="1"/>
</dbReference>
<dbReference type="SUPFAM" id="SSF75615">
    <property type="entry name" value="Siroheme synthase middle domains-like"/>
    <property type="match status" value="1"/>
</dbReference>
<dbReference type="SUPFAM" id="SSF53790">
    <property type="entry name" value="Tetrapyrrole methylase"/>
    <property type="match status" value="1"/>
</dbReference>
<dbReference type="PROSITE" id="PS00839">
    <property type="entry name" value="SUMT_1"/>
    <property type="match status" value="1"/>
</dbReference>
<dbReference type="PROSITE" id="PS00840">
    <property type="entry name" value="SUMT_2"/>
    <property type="match status" value="1"/>
</dbReference>